<name>PYK3_DICDI</name>
<reference key="1">
    <citation type="journal article" date="1996" name="FEBS Lett.">
        <title>Classification of tyrosine kinases from Dictyostelium discoideum with two distinct, complete or incomplete catalytic domains.</title>
        <authorList>
            <person name="Adler K."/>
            <person name="Gerisch G."/>
            <person name="von Hugo U."/>
            <person name="Lupas A."/>
            <person name="Schweiger A."/>
        </authorList>
    </citation>
    <scope>NUCLEOTIDE SEQUENCE [GENOMIC DNA / MRNA]</scope>
    <scope>AUTOPHOSPHORYLATION</scope>
    <source>
        <strain>AX2</strain>
    </source>
</reference>
<reference key="2">
    <citation type="journal article" date="2005" name="Nature">
        <title>The genome of the social amoeba Dictyostelium discoideum.</title>
        <authorList>
            <person name="Eichinger L."/>
            <person name="Pachebat J.A."/>
            <person name="Gloeckner G."/>
            <person name="Rajandream M.A."/>
            <person name="Sucgang R."/>
            <person name="Berriman M."/>
            <person name="Song J."/>
            <person name="Olsen R."/>
            <person name="Szafranski K."/>
            <person name="Xu Q."/>
            <person name="Tunggal B."/>
            <person name="Kummerfeld S."/>
            <person name="Madera M."/>
            <person name="Konfortov B.A."/>
            <person name="Rivero F."/>
            <person name="Bankier A.T."/>
            <person name="Lehmann R."/>
            <person name="Hamlin N."/>
            <person name="Davies R."/>
            <person name="Gaudet P."/>
            <person name="Fey P."/>
            <person name="Pilcher K."/>
            <person name="Chen G."/>
            <person name="Saunders D."/>
            <person name="Sodergren E.J."/>
            <person name="Davis P."/>
            <person name="Kerhornou A."/>
            <person name="Nie X."/>
            <person name="Hall N."/>
            <person name="Anjard C."/>
            <person name="Hemphill L."/>
            <person name="Bason N."/>
            <person name="Farbrother P."/>
            <person name="Desany B."/>
            <person name="Just E."/>
            <person name="Morio T."/>
            <person name="Rost R."/>
            <person name="Churcher C.M."/>
            <person name="Cooper J."/>
            <person name="Haydock S."/>
            <person name="van Driessche N."/>
            <person name="Cronin A."/>
            <person name="Goodhead I."/>
            <person name="Muzny D.M."/>
            <person name="Mourier T."/>
            <person name="Pain A."/>
            <person name="Lu M."/>
            <person name="Harper D."/>
            <person name="Lindsay R."/>
            <person name="Hauser H."/>
            <person name="James K.D."/>
            <person name="Quiles M."/>
            <person name="Madan Babu M."/>
            <person name="Saito T."/>
            <person name="Buchrieser C."/>
            <person name="Wardroper A."/>
            <person name="Felder M."/>
            <person name="Thangavelu M."/>
            <person name="Johnson D."/>
            <person name="Knights A."/>
            <person name="Loulseged H."/>
            <person name="Mungall K.L."/>
            <person name="Oliver K."/>
            <person name="Price C."/>
            <person name="Quail M.A."/>
            <person name="Urushihara H."/>
            <person name="Hernandez J."/>
            <person name="Rabbinowitsch E."/>
            <person name="Steffen D."/>
            <person name="Sanders M."/>
            <person name="Ma J."/>
            <person name="Kohara Y."/>
            <person name="Sharp S."/>
            <person name="Simmonds M.N."/>
            <person name="Spiegler S."/>
            <person name="Tivey A."/>
            <person name="Sugano S."/>
            <person name="White B."/>
            <person name="Walker D."/>
            <person name="Woodward J.R."/>
            <person name="Winckler T."/>
            <person name="Tanaka Y."/>
            <person name="Shaulsky G."/>
            <person name="Schleicher M."/>
            <person name="Weinstock G.M."/>
            <person name="Rosenthal A."/>
            <person name="Cox E.C."/>
            <person name="Chisholm R.L."/>
            <person name="Gibbs R.A."/>
            <person name="Loomis W.F."/>
            <person name="Platzer M."/>
            <person name="Kay R.R."/>
            <person name="Williams J.G."/>
            <person name="Dear P.H."/>
            <person name="Noegel A.A."/>
            <person name="Barrell B.G."/>
            <person name="Kuspa A."/>
        </authorList>
    </citation>
    <scope>NUCLEOTIDE SEQUENCE [LARGE SCALE GENOMIC DNA]</scope>
    <source>
        <strain>AX4</strain>
    </source>
</reference>
<reference key="3">
    <citation type="journal article" date="2008" name="Dev. Growth Differ.">
        <title>Dictyostelium kinase DPYK3 negatively regulates STATc signaling in cell fate decision.</title>
        <authorList>
            <person name="Lee N.-S."/>
            <person name="Rodriguez M."/>
            <person name="Kim B."/>
            <person name="Kim L."/>
        </authorList>
    </citation>
    <scope>FUNCTION</scope>
    <scope>DEVELOPMENTAL STAGE</scope>
</reference>
<keyword id="KW-0067">ATP-binding</keyword>
<keyword id="KW-0418">Kinase</keyword>
<keyword id="KW-0547">Nucleotide-binding</keyword>
<keyword id="KW-0597">Phosphoprotein</keyword>
<keyword id="KW-1185">Reference proteome</keyword>
<keyword id="KW-0677">Repeat</keyword>
<keyword id="KW-0808">Transferase</keyword>
<keyword id="KW-0829">Tyrosine-protein kinase</keyword>
<protein>
    <recommendedName>
        <fullName>Dual specificity protein kinase pyk3</fullName>
        <ecNumber>2.7.12.1</ecNumber>
    </recommendedName>
    <alternativeName>
        <fullName>Tyrosine-protein kinase 3</fullName>
    </alternativeName>
</protein>
<proteinExistence type="evidence at protein level"/>
<evidence type="ECO:0000255" key="1">
    <source>
        <dbReference type="PROSITE-ProRule" id="PRU00159"/>
    </source>
</evidence>
<evidence type="ECO:0000255" key="2">
    <source>
        <dbReference type="PROSITE-ProRule" id="PRU10028"/>
    </source>
</evidence>
<evidence type="ECO:0000256" key="3">
    <source>
        <dbReference type="SAM" id="MobiDB-lite"/>
    </source>
</evidence>
<evidence type="ECO:0000269" key="4">
    <source>
    </source>
</evidence>
<evidence type="ECO:0000305" key="5"/>
<comment type="function">
    <text evidence="4">Involved in the development. Negatively regulates tyrosine phosphorylation and activation state of dstC/STATc, probably by activating a dstC/STATc phosphatase.</text>
</comment>
<comment type="catalytic activity">
    <reaction>
        <text>L-seryl-[protein] + ATP = O-phospho-L-seryl-[protein] + ADP + H(+)</text>
        <dbReference type="Rhea" id="RHEA:17989"/>
        <dbReference type="Rhea" id="RHEA-COMP:9863"/>
        <dbReference type="Rhea" id="RHEA-COMP:11604"/>
        <dbReference type="ChEBI" id="CHEBI:15378"/>
        <dbReference type="ChEBI" id="CHEBI:29999"/>
        <dbReference type="ChEBI" id="CHEBI:30616"/>
        <dbReference type="ChEBI" id="CHEBI:83421"/>
        <dbReference type="ChEBI" id="CHEBI:456216"/>
        <dbReference type="EC" id="2.7.12.1"/>
    </reaction>
</comment>
<comment type="catalytic activity">
    <reaction>
        <text>L-threonyl-[protein] + ATP = O-phospho-L-threonyl-[protein] + ADP + H(+)</text>
        <dbReference type="Rhea" id="RHEA:46608"/>
        <dbReference type="Rhea" id="RHEA-COMP:11060"/>
        <dbReference type="Rhea" id="RHEA-COMP:11605"/>
        <dbReference type="ChEBI" id="CHEBI:15378"/>
        <dbReference type="ChEBI" id="CHEBI:30013"/>
        <dbReference type="ChEBI" id="CHEBI:30616"/>
        <dbReference type="ChEBI" id="CHEBI:61977"/>
        <dbReference type="ChEBI" id="CHEBI:456216"/>
        <dbReference type="EC" id="2.7.12.1"/>
    </reaction>
</comment>
<comment type="catalytic activity">
    <reaction>
        <text>L-tyrosyl-[protein] + ATP = O-phospho-L-tyrosyl-[protein] + ADP + H(+)</text>
        <dbReference type="Rhea" id="RHEA:10596"/>
        <dbReference type="Rhea" id="RHEA-COMP:10136"/>
        <dbReference type="Rhea" id="RHEA-COMP:20101"/>
        <dbReference type="ChEBI" id="CHEBI:15378"/>
        <dbReference type="ChEBI" id="CHEBI:30616"/>
        <dbReference type="ChEBI" id="CHEBI:46858"/>
        <dbReference type="ChEBI" id="CHEBI:61978"/>
        <dbReference type="ChEBI" id="CHEBI:456216"/>
        <dbReference type="EC" id="2.7.12.1"/>
    </reaction>
</comment>
<comment type="developmental stage">
    <text evidence="4">Expression is initially low during the vegetative stage, but increases after 5 and 15 hours of development. Up-regulation of the expression at the postaggregative stages is observed.</text>
</comment>
<comment type="domain">
    <text>The truncated N-terminal protein kinase domain lacks most of its classical characteristics and in vitro, has no activity.</text>
</comment>
<comment type="domain">
    <text>The protein kinase domain 1 is predicted to be catalytically inactive.</text>
</comment>
<comment type="PTM">
    <text>C-terminal tyrosine kinase domain is capable of autophosphorylation, in vitro.</text>
</comment>
<comment type="similarity">
    <text evidence="5">Belongs to the protein kinase superfamily. TKL Tyr protein kinase family.</text>
</comment>
<gene>
    <name type="primary">pyk3</name>
    <name type="synonym">DpyK3</name>
    <name type="synonym">pkyA</name>
    <name type="ORF">DDB_G0289001</name>
</gene>
<feature type="chain" id="PRO_0000354056" description="Dual specificity protein kinase pyk3">
    <location>
        <begin position="1"/>
        <end position="1338"/>
    </location>
</feature>
<feature type="domain" description="Protein kinase 1" evidence="1">
    <location>
        <begin position="693"/>
        <end position="1014"/>
    </location>
</feature>
<feature type="domain" description="Protein kinase 2" evidence="1">
    <location>
        <begin position="1057"/>
        <end position="1309"/>
    </location>
</feature>
<feature type="region of interest" description="Disordered" evidence="3">
    <location>
        <begin position="1"/>
        <end position="21"/>
    </location>
</feature>
<feature type="region of interest" description="Disordered" evidence="3">
    <location>
        <begin position="203"/>
        <end position="254"/>
    </location>
</feature>
<feature type="region of interest" description="Disordered" evidence="3">
    <location>
        <begin position="282"/>
        <end position="316"/>
    </location>
</feature>
<feature type="region of interest" description="Disordered" evidence="3">
    <location>
        <begin position="449"/>
        <end position="515"/>
    </location>
</feature>
<feature type="region of interest" description="Disordered" evidence="3">
    <location>
        <begin position="595"/>
        <end position="618"/>
    </location>
</feature>
<feature type="region of interest" description="Disordered" evidence="3">
    <location>
        <begin position="648"/>
        <end position="673"/>
    </location>
</feature>
<feature type="region of interest" description="Disordered" evidence="3">
    <location>
        <begin position="770"/>
        <end position="802"/>
    </location>
</feature>
<feature type="compositionally biased region" description="Acidic residues" evidence="3">
    <location>
        <begin position="212"/>
        <end position="231"/>
    </location>
</feature>
<feature type="compositionally biased region" description="Basic residues" evidence="3">
    <location>
        <begin position="449"/>
        <end position="463"/>
    </location>
</feature>
<feature type="compositionally biased region" description="Low complexity" evidence="3">
    <location>
        <begin position="482"/>
        <end position="500"/>
    </location>
</feature>
<feature type="compositionally biased region" description="Gly residues" evidence="3">
    <location>
        <begin position="657"/>
        <end position="667"/>
    </location>
</feature>
<feature type="compositionally biased region" description="Low complexity" evidence="3">
    <location>
        <begin position="773"/>
        <end position="790"/>
    </location>
</feature>
<feature type="active site" description="Proton acceptor" evidence="1 2">
    <location>
        <position position="1174"/>
    </location>
</feature>
<feature type="binding site" evidence="1">
    <location>
        <begin position="699"/>
        <end position="707"/>
    </location>
    <ligand>
        <name>ATP</name>
        <dbReference type="ChEBI" id="CHEBI:30616"/>
    </ligand>
</feature>
<feature type="binding site" evidence="1">
    <location>
        <position position="727"/>
    </location>
    <ligand>
        <name>ATP</name>
        <dbReference type="ChEBI" id="CHEBI:30616"/>
    </ligand>
</feature>
<feature type="binding site" evidence="1">
    <location>
        <begin position="1063"/>
        <end position="1071"/>
    </location>
    <ligand>
        <name>ATP</name>
        <dbReference type="ChEBI" id="CHEBI:30616"/>
    </ligand>
</feature>
<feature type="binding site" evidence="1">
    <location>
        <position position="1084"/>
    </location>
    <ligand>
        <name>ATP</name>
        <dbReference type="ChEBI" id="CHEBI:30616"/>
    </ligand>
</feature>
<feature type="sequence conflict" description="In Ref. 1; AAB04169." evidence="5" ref="1">
    <original>APEM</original>
    <variation>GTET</variation>
    <location>
        <begin position="917"/>
        <end position="920"/>
    </location>
</feature>
<feature type="sequence conflict" description="In Ref. 1; AAB04169/AAB04999." evidence="5" ref="1">
    <original>I</original>
    <variation>F</variation>
    <location>
        <position position="979"/>
    </location>
</feature>
<feature type="sequence conflict" description="In Ref. 1; AAB04999." evidence="5" ref="1">
    <original>E</original>
    <variation>G</variation>
    <location>
        <position position="1009"/>
    </location>
</feature>
<feature type="sequence conflict" description="In Ref. 1; AAB04169." evidence="5" ref="1">
    <original>W</original>
    <variation>R</variation>
    <location>
        <position position="1021"/>
    </location>
</feature>
<feature type="sequence conflict" description="In Ref. 1; AAB04999." evidence="5" ref="1">
    <original>K</original>
    <variation>R</variation>
    <location>
        <position position="1062"/>
    </location>
</feature>
<feature type="sequence conflict" description="In Ref. 1; AAB04999." evidence="5" ref="1">
    <original>F</original>
    <variation>S</variation>
    <location>
        <position position="1072"/>
    </location>
</feature>
<feature type="sequence conflict" description="In Ref. 1; AAB04169/AAB04999." evidence="5" ref="1">
    <original>C</original>
    <variation>R</variation>
    <location>
        <position position="1119"/>
    </location>
</feature>
<dbReference type="EC" id="2.7.12.1"/>
<dbReference type="EMBL" id="U01064">
    <property type="protein sequence ID" value="AAB04169.1"/>
    <property type="molecule type" value="mRNA"/>
</dbReference>
<dbReference type="EMBL" id="U64830">
    <property type="protein sequence ID" value="AAB04999.1"/>
    <property type="molecule type" value="Genomic_DNA"/>
</dbReference>
<dbReference type="EMBL" id="AAFI02000129">
    <property type="protein sequence ID" value="EAL62916.1"/>
    <property type="molecule type" value="Genomic_DNA"/>
</dbReference>
<dbReference type="PIR" id="T18287">
    <property type="entry name" value="T18287"/>
</dbReference>
<dbReference type="RefSeq" id="XP_636435.1">
    <property type="nucleotide sequence ID" value="XM_631343.1"/>
</dbReference>
<dbReference type="SMR" id="Q54I36"/>
<dbReference type="FunCoup" id="Q54I36">
    <property type="interactions" value="245"/>
</dbReference>
<dbReference type="STRING" id="44689.Q54I36"/>
<dbReference type="PaxDb" id="44689-DDB0191218"/>
<dbReference type="EnsemblProtists" id="EAL62916">
    <property type="protein sequence ID" value="EAL62916"/>
    <property type="gene ID" value="DDB_G0289001"/>
</dbReference>
<dbReference type="GeneID" id="8626928"/>
<dbReference type="KEGG" id="ddi:DDB_G0289001"/>
<dbReference type="dictyBase" id="DDB_G0289001">
    <property type="gene designation" value="pyk3"/>
</dbReference>
<dbReference type="VEuPathDB" id="AmoebaDB:DDB_G0289001"/>
<dbReference type="eggNOG" id="KOG0192">
    <property type="taxonomic scope" value="Eukaryota"/>
</dbReference>
<dbReference type="HOGENOM" id="CLU_258584_0_0_1"/>
<dbReference type="InParanoid" id="Q54I36"/>
<dbReference type="OMA" id="PPCIFTE"/>
<dbReference type="PRO" id="PR:Q54I36"/>
<dbReference type="Proteomes" id="UP000002195">
    <property type="component" value="Chromosome 5"/>
</dbReference>
<dbReference type="GO" id="GO:0005938">
    <property type="term" value="C:cell cortex"/>
    <property type="evidence" value="ECO:0000314"/>
    <property type="project" value="dictyBase"/>
</dbReference>
<dbReference type="GO" id="GO:0005737">
    <property type="term" value="C:cytoplasm"/>
    <property type="evidence" value="ECO:0000318"/>
    <property type="project" value="GO_Central"/>
</dbReference>
<dbReference type="GO" id="GO:0005829">
    <property type="term" value="C:cytosol"/>
    <property type="evidence" value="ECO:0000314"/>
    <property type="project" value="dictyBase"/>
</dbReference>
<dbReference type="GO" id="GO:0005524">
    <property type="term" value="F:ATP binding"/>
    <property type="evidence" value="ECO:0000305"/>
    <property type="project" value="dictyBase"/>
</dbReference>
<dbReference type="GO" id="GO:0004672">
    <property type="term" value="F:protein kinase activity"/>
    <property type="evidence" value="ECO:0000314"/>
    <property type="project" value="dictyBase"/>
</dbReference>
<dbReference type="GO" id="GO:0106310">
    <property type="term" value="F:protein serine kinase activity"/>
    <property type="evidence" value="ECO:0007669"/>
    <property type="project" value="RHEA"/>
</dbReference>
<dbReference type="GO" id="GO:0004712">
    <property type="term" value="F:protein serine/threonine/tyrosine kinase activity"/>
    <property type="evidence" value="ECO:0007669"/>
    <property type="project" value="UniProtKB-EC"/>
</dbReference>
<dbReference type="GO" id="GO:0004713">
    <property type="term" value="F:protein tyrosine kinase activity"/>
    <property type="evidence" value="ECO:0000314"/>
    <property type="project" value="dictyBase"/>
</dbReference>
<dbReference type="GO" id="GO:0006972">
    <property type="term" value="P:hyperosmotic response"/>
    <property type="evidence" value="ECO:0000316"/>
    <property type="project" value="dictyBase"/>
</dbReference>
<dbReference type="GO" id="GO:0010628">
    <property type="term" value="P:positive regulation of gene expression"/>
    <property type="evidence" value="ECO:0000315"/>
    <property type="project" value="dictyBase"/>
</dbReference>
<dbReference type="GO" id="GO:0042307">
    <property type="term" value="P:positive regulation of protein import into nucleus"/>
    <property type="evidence" value="ECO:0000316"/>
    <property type="project" value="dictyBase"/>
</dbReference>
<dbReference type="GO" id="GO:1904894">
    <property type="term" value="P:positive regulation of receptor signaling pathway via STAT"/>
    <property type="evidence" value="ECO:0000315"/>
    <property type="project" value="dictyBase"/>
</dbReference>
<dbReference type="GO" id="GO:0045595">
    <property type="term" value="P:regulation of cell differentiation"/>
    <property type="evidence" value="ECO:0000315"/>
    <property type="project" value="dictyBase"/>
</dbReference>
<dbReference type="GO" id="GO:0031156">
    <property type="term" value="P:regulation of sorocarp development"/>
    <property type="evidence" value="ECO:0000315"/>
    <property type="project" value="dictyBase"/>
</dbReference>
<dbReference type="GO" id="GO:0007165">
    <property type="term" value="P:signal transduction"/>
    <property type="evidence" value="ECO:0000318"/>
    <property type="project" value="GO_Central"/>
</dbReference>
<dbReference type="GO" id="GO:0030587">
    <property type="term" value="P:sorocarp development"/>
    <property type="evidence" value="ECO:0000316"/>
    <property type="project" value="dictyBase"/>
</dbReference>
<dbReference type="CDD" id="cd13999">
    <property type="entry name" value="STKc_MAP3K-like"/>
    <property type="match status" value="1"/>
</dbReference>
<dbReference type="FunFam" id="1.10.510.10:FF:002675">
    <property type="match status" value="2"/>
</dbReference>
<dbReference type="Gene3D" id="3.30.200.20">
    <property type="entry name" value="Phosphorylase Kinase, domain 1"/>
    <property type="match status" value="1"/>
</dbReference>
<dbReference type="Gene3D" id="1.10.510.10">
    <property type="entry name" value="Transferase(Phosphotransferase) domain 1"/>
    <property type="match status" value="2"/>
</dbReference>
<dbReference type="InterPro" id="IPR011009">
    <property type="entry name" value="Kinase-like_dom_sf"/>
</dbReference>
<dbReference type="InterPro" id="IPR000719">
    <property type="entry name" value="Prot_kinase_dom"/>
</dbReference>
<dbReference type="InterPro" id="IPR017441">
    <property type="entry name" value="Protein_kinase_ATP_BS"/>
</dbReference>
<dbReference type="InterPro" id="IPR001245">
    <property type="entry name" value="Ser-Thr/Tyr_kinase_cat_dom"/>
</dbReference>
<dbReference type="InterPro" id="IPR051681">
    <property type="entry name" value="Ser/Thr_Kinases-Pseudokinases"/>
</dbReference>
<dbReference type="InterPro" id="IPR008266">
    <property type="entry name" value="Tyr_kinase_AS"/>
</dbReference>
<dbReference type="PANTHER" id="PTHR44329:SF298">
    <property type="entry name" value="MIXED LINEAGE KINASE DOMAIN-LIKE PROTEIN"/>
    <property type="match status" value="1"/>
</dbReference>
<dbReference type="PANTHER" id="PTHR44329">
    <property type="entry name" value="SERINE/THREONINE-PROTEIN KINASE TNNI3K-RELATED"/>
    <property type="match status" value="1"/>
</dbReference>
<dbReference type="Pfam" id="PF07714">
    <property type="entry name" value="PK_Tyr_Ser-Thr"/>
    <property type="match status" value="2"/>
</dbReference>
<dbReference type="PRINTS" id="PR00109">
    <property type="entry name" value="TYRKINASE"/>
</dbReference>
<dbReference type="SUPFAM" id="SSF56112">
    <property type="entry name" value="Protein kinase-like (PK-like)"/>
    <property type="match status" value="2"/>
</dbReference>
<dbReference type="PROSITE" id="PS00107">
    <property type="entry name" value="PROTEIN_KINASE_ATP"/>
    <property type="match status" value="1"/>
</dbReference>
<dbReference type="PROSITE" id="PS50011">
    <property type="entry name" value="PROTEIN_KINASE_DOM"/>
    <property type="match status" value="2"/>
</dbReference>
<dbReference type="PROSITE" id="PS00109">
    <property type="entry name" value="PROTEIN_KINASE_TYR"/>
    <property type="match status" value="1"/>
</dbReference>
<accession>Q54I36</accession>
<accession>Q23846</accession>
<accession>Q23927</accession>
<sequence length="1338" mass="149944">MDSFNNNNNNNNNNNNNNNNINGEGITLRTLLNSCTNTSSNEQLIVNNVNKNSNIINNININNTPSPISTCINVNKIELRGSSNGIFLNSKIKVPLPNSTLLEQQQDGADEQDKKQQSLSDKNILFSSGDKEFLNHGSNNIITDQNTLLYQLQQQQQKEKEKENDEIMNHDDIIGYNEENEDNFFNEGMDPILAHSIEHHLHNHHHHHGEFDTQENEDTSGESSDESENIDEVLVYTEDIESEKEKKRERLITSPPSFDPHTLYSMSQSLLNCSLNNNNNNNNSISSPSSSINNSGNNINLNNSGNNNVNSNNNTNIINNSNDNFISQPLFNPLSMPNNEQYELLPNPTTTTSTITSTTTTTTITNLPPALPSFPSSSSIKSLKNSFGSNSITSSGELNNVFSSSMSPPMSPPNRNVRSLTFPGTNPINCINTSVINSITANTNCINHHHHHHQHNHHNHHQGHNNINNSGHIRKSADDTVTLSPTLSSGSSSTSSSNPHHPNHNHQKGLNNKTLEKLSCTRKEIYELIEKKESLIEKQNLIDEGYSENADSFENLSEEIQKINEKIIELENLITSLSNSNSNWSLNGSSTSTISCNPLSPRSMNPSSSTSSTSSNLTNSLRKFSQELKIELRPLDLRAELYSSINTSPRGSASISGGSGSGGGGNNNGCFKTSSNSSINSPIQFFENENESIDSYEKKNEEQFESLTQLIRENQLYTKPIEFKEIKLLEKLESNSKSSNIWQIEYKSTQLVLKQPKDQDSDKNIEKRKQLFNGSNVSGSNNSGSSGGNNHNHHHCNNSNGSNSEVIPSKYTMIQHKNLGLLVGWCGDSIIFESFKGMNSLHDLIHRDGLKIDMALFIKISKDIASVMGLLHSKDVAHGNLTSRSIYLDRFQIVKVSFPKLNATDLNNPAIEPRYMAPEMTRMEEDQISCSIDVYAYAFVLWEALTSHLPFRKFNDISVAAKVAYENLRPKIPTSCPLIIRKLINRCWAPLPSDRPTFNDILKLFDHLEGKLFFSSPGILWSLNNDQEVERELQKKERFNEITEFLRGKKEIKFDEVAIVEKVGAGSFANVFLGIWNGYKVAIKILKNESISNDEKFIKEVSSLIKSHHPNVVTFMGACIDPPCIFTEYLQGGSLYDVLHIQKIKLNPLMMYKMIHDLSLGMEHLHSIQMLHRDLTSKNILLDEFKNIKIADFGLATTLSDDMTLSGITNPRWRSPELTKGLVYNEKVDVYSFGLVVYEIYTGKIPFEGLDGTASAAKAAFENYRPAIPPDCPVSLRKLITKCWASDPSQRPSFTEILTELETMKSKFIKQLSFLNDLIQNPDDDYNNNLNYDEEVDS</sequence>
<organism>
    <name type="scientific">Dictyostelium discoideum</name>
    <name type="common">Social amoeba</name>
    <dbReference type="NCBI Taxonomy" id="44689"/>
    <lineage>
        <taxon>Eukaryota</taxon>
        <taxon>Amoebozoa</taxon>
        <taxon>Evosea</taxon>
        <taxon>Eumycetozoa</taxon>
        <taxon>Dictyostelia</taxon>
        <taxon>Dictyosteliales</taxon>
        <taxon>Dictyosteliaceae</taxon>
        <taxon>Dictyostelium</taxon>
    </lineage>
</organism>